<proteinExistence type="inferred from homology"/>
<name>RNC_BACC2</name>
<comment type="function">
    <text evidence="1">Digests double-stranded RNA. Involved in the processing of primary rRNA transcript to yield the immediate precursors to the large and small rRNAs (23S and 16S). Processes some mRNAs, and tRNAs when they are encoded in the rRNA operon. Processes pre-crRNA and tracrRNA of type II CRISPR loci if present in the organism.</text>
</comment>
<comment type="catalytic activity">
    <reaction evidence="1">
        <text>Endonucleolytic cleavage to 5'-phosphomonoester.</text>
        <dbReference type="EC" id="3.1.26.3"/>
    </reaction>
</comment>
<comment type="cofactor">
    <cofactor evidence="1">
        <name>Mg(2+)</name>
        <dbReference type="ChEBI" id="CHEBI:18420"/>
    </cofactor>
</comment>
<comment type="subunit">
    <text evidence="1">Homodimer.</text>
</comment>
<comment type="subcellular location">
    <subcellularLocation>
        <location evidence="1">Cytoplasm</location>
    </subcellularLocation>
</comment>
<comment type="similarity">
    <text evidence="1">Belongs to the ribonuclease III family.</text>
</comment>
<keyword id="KW-0963">Cytoplasm</keyword>
<keyword id="KW-0255">Endonuclease</keyword>
<keyword id="KW-0378">Hydrolase</keyword>
<keyword id="KW-0460">Magnesium</keyword>
<keyword id="KW-0479">Metal-binding</keyword>
<keyword id="KW-0507">mRNA processing</keyword>
<keyword id="KW-0540">Nuclease</keyword>
<keyword id="KW-0694">RNA-binding</keyword>
<keyword id="KW-0698">rRNA processing</keyword>
<keyword id="KW-0699">rRNA-binding</keyword>
<keyword id="KW-0819">tRNA processing</keyword>
<gene>
    <name evidence="1" type="primary">rnc</name>
    <name type="ordered locus">BCG9842_B1295</name>
</gene>
<feature type="chain" id="PRO_1000194411" description="Ribonuclease 3">
    <location>
        <begin position="1"/>
        <end position="245"/>
    </location>
</feature>
<feature type="domain" description="RNase III" evidence="1">
    <location>
        <begin position="19"/>
        <end position="148"/>
    </location>
</feature>
<feature type="domain" description="DRBM" evidence="1">
    <location>
        <begin position="174"/>
        <end position="243"/>
    </location>
</feature>
<feature type="active site" evidence="1">
    <location>
        <position position="65"/>
    </location>
</feature>
<feature type="active site" evidence="1">
    <location>
        <position position="137"/>
    </location>
</feature>
<feature type="binding site" evidence="1">
    <location>
        <position position="61"/>
    </location>
    <ligand>
        <name>Mg(2+)</name>
        <dbReference type="ChEBI" id="CHEBI:18420"/>
    </ligand>
</feature>
<feature type="binding site" evidence="1">
    <location>
        <position position="134"/>
    </location>
    <ligand>
        <name>Mg(2+)</name>
        <dbReference type="ChEBI" id="CHEBI:18420"/>
    </ligand>
</feature>
<feature type="binding site" evidence="1">
    <location>
        <position position="137"/>
    </location>
    <ligand>
        <name>Mg(2+)</name>
        <dbReference type="ChEBI" id="CHEBI:18420"/>
    </ligand>
</feature>
<reference key="1">
    <citation type="submission" date="2008-10" db="EMBL/GenBank/DDBJ databases">
        <title>Genome sequence of Bacillus cereus G9842.</title>
        <authorList>
            <person name="Dodson R.J."/>
            <person name="Durkin A.S."/>
            <person name="Rosovitz M.J."/>
            <person name="Rasko D.A."/>
            <person name="Hoffmaster A."/>
            <person name="Ravel J."/>
            <person name="Sutton G."/>
        </authorList>
    </citation>
    <scope>NUCLEOTIDE SEQUENCE [LARGE SCALE GENOMIC DNA]</scope>
    <source>
        <strain>G9842</strain>
    </source>
</reference>
<dbReference type="EC" id="3.1.26.3" evidence="1"/>
<dbReference type="EMBL" id="CP001186">
    <property type="protein sequence ID" value="ACK96559.1"/>
    <property type="molecule type" value="Genomic_DNA"/>
</dbReference>
<dbReference type="SMR" id="B7IUK8"/>
<dbReference type="KEGG" id="bcg:BCG9842_B1295"/>
<dbReference type="HOGENOM" id="CLU_000907_1_3_9"/>
<dbReference type="Proteomes" id="UP000006744">
    <property type="component" value="Chromosome"/>
</dbReference>
<dbReference type="GO" id="GO:0005737">
    <property type="term" value="C:cytoplasm"/>
    <property type="evidence" value="ECO:0007669"/>
    <property type="project" value="UniProtKB-SubCell"/>
</dbReference>
<dbReference type="GO" id="GO:0003725">
    <property type="term" value="F:double-stranded RNA binding"/>
    <property type="evidence" value="ECO:0007669"/>
    <property type="project" value="TreeGrafter"/>
</dbReference>
<dbReference type="GO" id="GO:0046872">
    <property type="term" value="F:metal ion binding"/>
    <property type="evidence" value="ECO:0007669"/>
    <property type="project" value="UniProtKB-KW"/>
</dbReference>
<dbReference type="GO" id="GO:0004525">
    <property type="term" value="F:ribonuclease III activity"/>
    <property type="evidence" value="ECO:0007669"/>
    <property type="project" value="UniProtKB-UniRule"/>
</dbReference>
<dbReference type="GO" id="GO:0019843">
    <property type="term" value="F:rRNA binding"/>
    <property type="evidence" value="ECO:0007669"/>
    <property type="project" value="UniProtKB-KW"/>
</dbReference>
<dbReference type="GO" id="GO:0006397">
    <property type="term" value="P:mRNA processing"/>
    <property type="evidence" value="ECO:0007669"/>
    <property type="project" value="UniProtKB-UniRule"/>
</dbReference>
<dbReference type="GO" id="GO:0010468">
    <property type="term" value="P:regulation of gene expression"/>
    <property type="evidence" value="ECO:0007669"/>
    <property type="project" value="TreeGrafter"/>
</dbReference>
<dbReference type="GO" id="GO:0006364">
    <property type="term" value="P:rRNA processing"/>
    <property type="evidence" value="ECO:0007669"/>
    <property type="project" value="UniProtKB-UniRule"/>
</dbReference>
<dbReference type="GO" id="GO:0008033">
    <property type="term" value="P:tRNA processing"/>
    <property type="evidence" value="ECO:0007669"/>
    <property type="project" value="UniProtKB-KW"/>
</dbReference>
<dbReference type="CDD" id="cd10845">
    <property type="entry name" value="DSRM_RNAse_III_family"/>
    <property type="match status" value="1"/>
</dbReference>
<dbReference type="CDD" id="cd00593">
    <property type="entry name" value="RIBOc"/>
    <property type="match status" value="1"/>
</dbReference>
<dbReference type="FunFam" id="1.10.1520.10:FF:000001">
    <property type="entry name" value="Ribonuclease 3"/>
    <property type="match status" value="1"/>
</dbReference>
<dbReference type="FunFam" id="3.30.160.20:FF:000003">
    <property type="entry name" value="Ribonuclease 3"/>
    <property type="match status" value="1"/>
</dbReference>
<dbReference type="Gene3D" id="3.30.160.20">
    <property type="match status" value="1"/>
</dbReference>
<dbReference type="Gene3D" id="1.10.1520.10">
    <property type="entry name" value="Ribonuclease III domain"/>
    <property type="match status" value="1"/>
</dbReference>
<dbReference type="HAMAP" id="MF_00104">
    <property type="entry name" value="RNase_III"/>
    <property type="match status" value="1"/>
</dbReference>
<dbReference type="InterPro" id="IPR014720">
    <property type="entry name" value="dsRBD_dom"/>
</dbReference>
<dbReference type="InterPro" id="IPR011907">
    <property type="entry name" value="RNase_III"/>
</dbReference>
<dbReference type="InterPro" id="IPR000999">
    <property type="entry name" value="RNase_III_dom"/>
</dbReference>
<dbReference type="InterPro" id="IPR036389">
    <property type="entry name" value="RNase_III_sf"/>
</dbReference>
<dbReference type="NCBIfam" id="TIGR02191">
    <property type="entry name" value="RNaseIII"/>
    <property type="match status" value="1"/>
</dbReference>
<dbReference type="PANTHER" id="PTHR11207:SF0">
    <property type="entry name" value="RIBONUCLEASE 3"/>
    <property type="match status" value="1"/>
</dbReference>
<dbReference type="PANTHER" id="PTHR11207">
    <property type="entry name" value="RIBONUCLEASE III"/>
    <property type="match status" value="1"/>
</dbReference>
<dbReference type="Pfam" id="PF00035">
    <property type="entry name" value="dsrm"/>
    <property type="match status" value="1"/>
</dbReference>
<dbReference type="Pfam" id="PF14622">
    <property type="entry name" value="Ribonucleas_3_3"/>
    <property type="match status" value="1"/>
</dbReference>
<dbReference type="SMART" id="SM00358">
    <property type="entry name" value="DSRM"/>
    <property type="match status" value="1"/>
</dbReference>
<dbReference type="SMART" id="SM00535">
    <property type="entry name" value="RIBOc"/>
    <property type="match status" value="1"/>
</dbReference>
<dbReference type="SUPFAM" id="SSF54768">
    <property type="entry name" value="dsRNA-binding domain-like"/>
    <property type="match status" value="1"/>
</dbReference>
<dbReference type="SUPFAM" id="SSF69065">
    <property type="entry name" value="RNase III domain-like"/>
    <property type="match status" value="1"/>
</dbReference>
<dbReference type="PROSITE" id="PS50137">
    <property type="entry name" value="DS_RBD"/>
    <property type="match status" value="1"/>
</dbReference>
<dbReference type="PROSITE" id="PS00517">
    <property type="entry name" value="RNASE_3_1"/>
    <property type="match status" value="1"/>
</dbReference>
<dbReference type="PROSITE" id="PS50142">
    <property type="entry name" value="RNASE_3_2"/>
    <property type="match status" value="1"/>
</dbReference>
<evidence type="ECO:0000255" key="1">
    <source>
        <dbReference type="HAMAP-Rule" id="MF_00104"/>
    </source>
</evidence>
<accession>B7IUK8</accession>
<organism>
    <name type="scientific">Bacillus cereus (strain G9842)</name>
    <dbReference type="NCBI Taxonomy" id="405531"/>
    <lineage>
        <taxon>Bacteria</taxon>
        <taxon>Bacillati</taxon>
        <taxon>Bacillota</taxon>
        <taxon>Bacilli</taxon>
        <taxon>Bacillales</taxon>
        <taxon>Bacillaceae</taxon>
        <taxon>Bacillus</taxon>
        <taxon>Bacillus cereus group</taxon>
    </lineage>
</organism>
<sequence length="245" mass="28037">MPYRKYREKKYETKYREAFKVFQEKIGITFTDEKLLIQAFTHSSYVNEHRKKPHEDNERLEFLGDAVLELTVSQYLFQKYPTMSEGELTKLRAAIVCEPSLVRFANELSFGSLVLLGKGEEMTGGRERPALLADVFEAFIGALYLDQGLETVWEFLKEIVYPKINEGAFSHVMDYKSQLQELIQRDGSGNVEYQILQEKGPAHNREFVSRVTLNNVALGLGSGKSKKEAEQQAAAEALKKLKEQL</sequence>
<protein>
    <recommendedName>
        <fullName evidence="1">Ribonuclease 3</fullName>
        <ecNumber evidence="1">3.1.26.3</ecNumber>
    </recommendedName>
    <alternativeName>
        <fullName evidence="1">Ribonuclease III</fullName>
        <shortName evidence="1">RNase III</shortName>
    </alternativeName>
</protein>